<protein>
    <recommendedName>
        <fullName evidence="1">Holliday junction branch migration complex subunit RuvB</fullName>
        <ecNumber evidence="1">3.6.4.-</ecNumber>
    </recommendedName>
</protein>
<dbReference type="EC" id="3.6.4.-" evidence="1"/>
<dbReference type="EMBL" id="CP000444">
    <property type="protein sequence ID" value="ABI43064.1"/>
    <property type="molecule type" value="Genomic_DNA"/>
</dbReference>
<dbReference type="SMR" id="Q0HUZ1"/>
<dbReference type="KEGG" id="shm:Shewmr7_2076"/>
<dbReference type="HOGENOM" id="CLU_055599_1_0_6"/>
<dbReference type="GO" id="GO:0005737">
    <property type="term" value="C:cytoplasm"/>
    <property type="evidence" value="ECO:0007669"/>
    <property type="project" value="UniProtKB-SubCell"/>
</dbReference>
<dbReference type="GO" id="GO:0048476">
    <property type="term" value="C:Holliday junction resolvase complex"/>
    <property type="evidence" value="ECO:0007669"/>
    <property type="project" value="UniProtKB-UniRule"/>
</dbReference>
<dbReference type="GO" id="GO:0005524">
    <property type="term" value="F:ATP binding"/>
    <property type="evidence" value="ECO:0007669"/>
    <property type="project" value="UniProtKB-UniRule"/>
</dbReference>
<dbReference type="GO" id="GO:0016887">
    <property type="term" value="F:ATP hydrolysis activity"/>
    <property type="evidence" value="ECO:0007669"/>
    <property type="project" value="InterPro"/>
</dbReference>
<dbReference type="GO" id="GO:0000400">
    <property type="term" value="F:four-way junction DNA binding"/>
    <property type="evidence" value="ECO:0007669"/>
    <property type="project" value="UniProtKB-UniRule"/>
</dbReference>
<dbReference type="GO" id="GO:0009378">
    <property type="term" value="F:four-way junction helicase activity"/>
    <property type="evidence" value="ECO:0007669"/>
    <property type="project" value="InterPro"/>
</dbReference>
<dbReference type="GO" id="GO:0006310">
    <property type="term" value="P:DNA recombination"/>
    <property type="evidence" value="ECO:0007669"/>
    <property type="project" value="UniProtKB-UniRule"/>
</dbReference>
<dbReference type="GO" id="GO:0006281">
    <property type="term" value="P:DNA repair"/>
    <property type="evidence" value="ECO:0007669"/>
    <property type="project" value="UniProtKB-UniRule"/>
</dbReference>
<dbReference type="CDD" id="cd00009">
    <property type="entry name" value="AAA"/>
    <property type="match status" value="1"/>
</dbReference>
<dbReference type="FunFam" id="1.10.10.10:FF:000086">
    <property type="entry name" value="Holliday junction ATP-dependent DNA helicase RuvB"/>
    <property type="match status" value="1"/>
</dbReference>
<dbReference type="FunFam" id="1.10.8.60:FF:000023">
    <property type="entry name" value="Holliday junction ATP-dependent DNA helicase RuvB"/>
    <property type="match status" value="1"/>
</dbReference>
<dbReference type="FunFam" id="3.40.50.300:FF:000073">
    <property type="entry name" value="Holliday junction ATP-dependent DNA helicase RuvB"/>
    <property type="match status" value="1"/>
</dbReference>
<dbReference type="Gene3D" id="1.10.8.60">
    <property type="match status" value="1"/>
</dbReference>
<dbReference type="Gene3D" id="3.40.50.300">
    <property type="entry name" value="P-loop containing nucleotide triphosphate hydrolases"/>
    <property type="match status" value="1"/>
</dbReference>
<dbReference type="Gene3D" id="1.10.10.10">
    <property type="entry name" value="Winged helix-like DNA-binding domain superfamily/Winged helix DNA-binding domain"/>
    <property type="match status" value="1"/>
</dbReference>
<dbReference type="HAMAP" id="MF_00016">
    <property type="entry name" value="DNA_HJ_migration_RuvB"/>
    <property type="match status" value="1"/>
</dbReference>
<dbReference type="InterPro" id="IPR003593">
    <property type="entry name" value="AAA+_ATPase"/>
</dbReference>
<dbReference type="InterPro" id="IPR041445">
    <property type="entry name" value="AAA_lid_4"/>
</dbReference>
<dbReference type="InterPro" id="IPR004605">
    <property type="entry name" value="DNA_helicase_Holl-junc_RuvB"/>
</dbReference>
<dbReference type="InterPro" id="IPR027417">
    <property type="entry name" value="P-loop_NTPase"/>
</dbReference>
<dbReference type="InterPro" id="IPR008824">
    <property type="entry name" value="RuvB-like_N"/>
</dbReference>
<dbReference type="InterPro" id="IPR008823">
    <property type="entry name" value="RuvB_C"/>
</dbReference>
<dbReference type="InterPro" id="IPR036388">
    <property type="entry name" value="WH-like_DNA-bd_sf"/>
</dbReference>
<dbReference type="InterPro" id="IPR036390">
    <property type="entry name" value="WH_DNA-bd_sf"/>
</dbReference>
<dbReference type="NCBIfam" id="NF000868">
    <property type="entry name" value="PRK00080.1"/>
    <property type="match status" value="1"/>
</dbReference>
<dbReference type="NCBIfam" id="TIGR00635">
    <property type="entry name" value="ruvB"/>
    <property type="match status" value="1"/>
</dbReference>
<dbReference type="PANTHER" id="PTHR42848">
    <property type="match status" value="1"/>
</dbReference>
<dbReference type="PANTHER" id="PTHR42848:SF1">
    <property type="entry name" value="HOLLIDAY JUNCTION BRANCH MIGRATION COMPLEX SUBUNIT RUVB"/>
    <property type="match status" value="1"/>
</dbReference>
<dbReference type="Pfam" id="PF17864">
    <property type="entry name" value="AAA_lid_4"/>
    <property type="match status" value="1"/>
</dbReference>
<dbReference type="Pfam" id="PF05491">
    <property type="entry name" value="RuvB_C"/>
    <property type="match status" value="1"/>
</dbReference>
<dbReference type="Pfam" id="PF05496">
    <property type="entry name" value="RuvB_N"/>
    <property type="match status" value="1"/>
</dbReference>
<dbReference type="SMART" id="SM00382">
    <property type="entry name" value="AAA"/>
    <property type="match status" value="1"/>
</dbReference>
<dbReference type="SUPFAM" id="SSF52540">
    <property type="entry name" value="P-loop containing nucleoside triphosphate hydrolases"/>
    <property type="match status" value="1"/>
</dbReference>
<dbReference type="SUPFAM" id="SSF46785">
    <property type="entry name" value="Winged helix' DNA-binding domain"/>
    <property type="match status" value="1"/>
</dbReference>
<accession>Q0HUZ1</accession>
<reference key="1">
    <citation type="submission" date="2006-08" db="EMBL/GenBank/DDBJ databases">
        <title>Complete sequence of chromosome 1 of Shewanella sp. MR-7.</title>
        <authorList>
            <person name="Copeland A."/>
            <person name="Lucas S."/>
            <person name="Lapidus A."/>
            <person name="Barry K."/>
            <person name="Detter J.C."/>
            <person name="Glavina del Rio T."/>
            <person name="Hammon N."/>
            <person name="Israni S."/>
            <person name="Dalin E."/>
            <person name="Tice H."/>
            <person name="Pitluck S."/>
            <person name="Kiss H."/>
            <person name="Brettin T."/>
            <person name="Bruce D."/>
            <person name="Han C."/>
            <person name="Tapia R."/>
            <person name="Gilna P."/>
            <person name="Schmutz J."/>
            <person name="Larimer F."/>
            <person name="Land M."/>
            <person name="Hauser L."/>
            <person name="Kyrpides N."/>
            <person name="Mikhailova N."/>
            <person name="Nealson K."/>
            <person name="Konstantinidis K."/>
            <person name="Klappenbach J."/>
            <person name="Tiedje J."/>
            <person name="Richardson P."/>
        </authorList>
    </citation>
    <scope>NUCLEOTIDE SEQUENCE [LARGE SCALE GENOMIC DNA]</scope>
    <source>
        <strain>MR-7</strain>
    </source>
</reference>
<organism>
    <name type="scientific">Shewanella sp. (strain MR-7)</name>
    <dbReference type="NCBI Taxonomy" id="60481"/>
    <lineage>
        <taxon>Bacteria</taxon>
        <taxon>Pseudomonadati</taxon>
        <taxon>Pseudomonadota</taxon>
        <taxon>Gammaproteobacteria</taxon>
        <taxon>Alteromonadales</taxon>
        <taxon>Shewanellaceae</taxon>
        <taxon>Shewanella</taxon>
    </lineage>
</organism>
<comment type="function">
    <text evidence="1">The RuvA-RuvB-RuvC complex processes Holliday junction (HJ) DNA during genetic recombination and DNA repair, while the RuvA-RuvB complex plays an important role in the rescue of blocked DNA replication forks via replication fork reversal (RFR). RuvA specifically binds to HJ cruciform DNA, conferring on it an open structure. The RuvB hexamer acts as an ATP-dependent pump, pulling dsDNA into and through the RuvAB complex. RuvB forms 2 homohexamers on either side of HJ DNA bound by 1 or 2 RuvA tetramers; 4 subunits per hexamer contact DNA at a time. Coordinated motions by a converter formed by DNA-disengaged RuvB subunits stimulates ATP hydrolysis and nucleotide exchange. Immobilization of the converter enables RuvB to convert the ATP-contained energy into a lever motion, pulling 2 nucleotides of DNA out of the RuvA tetramer per ATP hydrolyzed, thus driving DNA branch migration. The RuvB motors rotate together with the DNA substrate, which together with the progressing nucleotide cycle form the mechanistic basis for DNA recombination by continuous HJ branch migration. Branch migration allows RuvC to scan DNA until it finds its consensus sequence, where it cleaves and resolves cruciform DNA.</text>
</comment>
<comment type="catalytic activity">
    <reaction evidence="1">
        <text>ATP + H2O = ADP + phosphate + H(+)</text>
        <dbReference type="Rhea" id="RHEA:13065"/>
        <dbReference type="ChEBI" id="CHEBI:15377"/>
        <dbReference type="ChEBI" id="CHEBI:15378"/>
        <dbReference type="ChEBI" id="CHEBI:30616"/>
        <dbReference type="ChEBI" id="CHEBI:43474"/>
        <dbReference type="ChEBI" id="CHEBI:456216"/>
    </reaction>
</comment>
<comment type="subunit">
    <text evidence="1">Homohexamer. Forms an RuvA(8)-RuvB(12)-Holliday junction (HJ) complex. HJ DNA is sandwiched between 2 RuvA tetramers; dsDNA enters through RuvA and exits via RuvB. An RuvB hexamer assembles on each DNA strand where it exits the tetramer. Each RuvB hexamer is contacted by two RuvA subunits (via domain III) on 2 adjacent RuvB subunits; this complex drives branch migration. In the full resolvosome a probable DNA-RuvA(4)-RuvB(12)-RuvC(2) complex forms which resolves the HJ.</text>
</comment>
<comment type="subcellular location">
    <subcellularLocation>
        <location evidence="1">Cytoplasm</location>
    </subcellularLocation>
</comment>
<comment type="domain">
    <text evidence="1">Has 3 domains, the large (RuvB-L) and small ATPase (RuvB-S) domains and the C-terminal head (RuvB-H) domain. The head domain binds DNA, while the ATPase domains jointly bind ATP, ADP or are empty depending on the state of the subunit in the translocation cycle. During a single DNA translocation step the structure of each domain remains the same, but their relative positions change.</text>
</comment>
<comment type="similarity">
    <text evidence="1">Belongs to the RuvB family.</text>
</comment>
<proteinExistence type="inferred from homology"/>
<sequence length="334" mass="36855">MIEADRLIQPQLQGQDDVIDRAMRPKLLDEYTGQDDTRAQLKVFIQAAKNREEALDHMLIYGPPGLGKTTLAMIVANEMGVNIKSTSGPVLEKAGDLAALLTNLEAGDVLFIDEIHRLSPVVEEILYPAMEDYQLDIMIGEGPAARSIKLDLPPFTLVGATTRAGALTSPLRARFGIPLRLEFYNVKDLSTIVSRSAQVMGLAIDSEGAIEIAKRSRGTPRIANRLLRRVRDYAEVKHDGAVTKKVAEHALDLLDVDGEGFDYMDRKLLLAIIDKFMGGPVGLDNLAAAIGEERETIEDVLEPFLIQQGFIQRTPRGRIATNRAYLHFGMIKPE</sequence>
<evidence type="ECO:0000255" key="1">
    <source>
        <dbReference type="HAMAP-Rule" id="MF_00016"/>
    </source>
</evidence>
<gene>
    <name evidence="1" type="primary">ruvB</name>
    <name type="ordered locus">Shewmr7_2076</name>
</gene>
<keyword id="KW-0067">ATP-binding</keyword>
<keyword id="KW-0963">Cytoplasm</keyword>
<keyword id="KW-0227">DNA damage</keyword>
<keyword id="KW-0233">DNA recombination</keyword>
<keyword id="KW-0234">DNA repair</keyword>
<keyword id="KW-0238">DNA-binding</keyword>
<keyword id="KW-0378">Hydrolase</keyword>
<keyword id="KW-0547">Nucleotide-binding</keyword>
<feature type="chain" id="PRO_1000001478" description="Holliday junction branch migration complex subunit RuvB">
    <location>
        <begin position="1"/>
        <end position="334"/>
    </location>
</feature>
<feature type="region of interest" description="Large ATPase domain (RuvB-L)" evidence="1">
    <location>
        <begin position="4"/>
        <end position="184"/>
    </location>
</feature>
<feature type="region of interest" description="Small ATPAse domain (RuvB-S)" evidence="1">
    <location>
        <begin position="185"/>
        <end position="255"/>
    </location>
</feature>
<feature type="region of interest" description="Head domain (RuvB-H)" evidence="1">
    <location>
        <begin position="258"/>
        <end position="334"/>
    </location>
</feature>
<feature type="binding site" evidence="1">
    <location>
        <position position="24"/>
    </location>
    <ligand>
        <name>ATP</name>
        <dbReference type="ChEBI" id="CHEBI:30616"/>
    </ligand>
</feature>
<feature type="binding site" evidence="1">
    <location>
        <position position="65"/>
    </location>
    <ligand>
        <name>ATP</name>
        <dbReference type="ChEBI" id="CHEBI:30616"/>
    </ligand>
</feature>
<feature type="binding site" evidence="1">
    <location>
        <position position="68"/>
    </location>
    <ligand>
        <name>ATP</name>
        <dbReference type="ChEBI" id="CHEBI:30616"/>
    </ligand>
</feature>
<feature type="binding site" evidence="1">
    <location>
        <position position="69"/>
    </location>
    <ligand>
        <name>ATP</name>
        <dbReference type="ChEBI" id="CHEBI:30616"/>
    </ligand>
</feature>
<feature type="binding site" evidence="1">
    <location>
        <position position="69"/>
    </location>
    <ligand>
        <name>Mg(2+)</name>
        <dbReference type="ChEBI" id="CHEBI:18420"/>
    </ligand>
</feature>
<feature type="binding site" evidence="1">
    <location>
        <position position="70"/>
    </location>
    <ligand>
        <name>ATP</name>
        <dbReference type="ChEBI" id="CHEBI:30616"/>
    </ligand>
</feature>
<feature type="binding site" evidence="1">
    <location>
        <begin position="131"/>
        <end position="133"/>
    </location>
    <ligand>
        <name>ATP</name>
        <dbReference type="ChEBI" id="CHEBI:30616"/>
    </ligand>
</feature>
<feature type="binding site" evidence="1">
    <location>
        <position position="174"/>
    </location>
    <ligand>
        <name>ATP</name>
        <dbReference type="ChEBI" id="CHEBI:30616"/>
    </ligand>
</feature>
<feature type="binding site" evidence="1">
    <location>
        <position position="184"/>
    </location>
    <ligand>
        <name>ATP</name>
        <dbReference type="ChEBI" id="CHEBI:30616"/>
    </ligand>
</feature>
<feature type="binding site" evidence="1">
    <location>
        <position position="221"/>
    </location>
    <ligand>
        <name>ATP</name>
        <dbReference type="ChEBI" id="CHEBI:30616"/>
    </ligand>
</feature>
<feature type="binding site" evidence="1">
    <location>
        <position position="294"/>
    </location>
    <ligand>
        <name>DNA</name>
        <dbReference type="ChEBI" id="CHEBI:16991"/>
    </ligand>
</feature>
<feature type="binding site" evidence="1">
    <location>
        <position position="313"/>
    </location>
    <ligand>
        <name>DNA</name>
        <dbReference type="ChEBI" id="CHEBI:16991"/>
    </ligand>
</feature>
<feature type="binding site" evidence="1">
    <location>
        <position position="318"/>
    </location>
    <ligand>
        <name>DNA</name>
        <dbReference type="ChEBI" id="CHEBI:16991"/>
    </ligand>
</feature>
<name>RUVB_SHESR</name>